<name>TGT_BACHK</name>
<protein>
    <recommendedName>
        <fullName evidence="1">Queuine tRNA-ribosyltransferase</fullName>
        <ecNumber evidence="1">2.4.2.29</ecNumber>
    </recommendedName>
    <alternativeName>
        <fullName evidence="1">Guanine insertion enzyme</fullName>
    </alternativeName>
    <alternativeName>
        <fullName evidence="1">tRNA-guanine transglycosylase</fullName>
    </alternativeName>
</protein>
<sequence>MTAIRYEFIKTCKQTGARLGRVHTPHGSFDTPTFMPVGTLATVKTMSPEELKAMDSGIILSNTYHLWLRPGHEIIREAGGLHKFMNWDRAILTDSGGFQVFSLSDFRRIEEEGVHFRNHLNGDKLFLSPEKAMEIQNALGSDIMMAFDECPPFPATFEYMKKSVERTSRWAERCLKAHERPQDQGLFGIVQGGEFEELRRQSAKDLVSMDFPGYAVGGLSVGEPKDIMNRVLEFTTPLLPDNKPRYLMGVGSPDSLIDGAIRGIDMFDCVLPTRIARNGTCMTSEGRLVVKNAKFARDFGPLDPNCDCYTCKNYSRAYIRHLMKCDETFGIRLTSYHNLHFLLNLMEQVRQAIREDRLGDFREEFFEQYGFNKPNAKNF</sequence>
<dbReference type="EC" id="2.4.2.29" evidence="1"/>
<dbReference type="EMBL" id="AE017355">
    <property type="protein sequence ID" value="AAT63704.1"/>
    <property type="molecule type" value="Genomic_DNA"/>
</dbReference>
<dbReference type="RefSeq" id="WP_000125362.1">
    <property type="nucleotide sequence ID" value="NC_005957.1"/>
</dbReference>
<dbReference type="RefSeq" id="YP_038467.1">
    <property type="nucleotide sequence ID" value="NC_005957.1"/>
</dbReference>
<dbReference type="SMR" id="Q6HDA9"/>
<dbReference type="GeneID" id="92798989"/>
<dbReference type="KEGG" id="btk:BT9727_4150"/>
<dbReference type="PATRIC" id="fig|281309.8.peg.4428"/>
<dbReference type="HOGENOM" id="CLU_022060_0_1_9"/>
<dbReference type="UniPathway" id="UPA00392"/>
<dbReference type="Proteomes" id="UP000001301">
    <property type="component" value="Chromosome"/>
</dbReference>
<dbReference type="GO" id="GO:0005829">
    <property type="term" value="C:cytosol"/>
    <property type="evidence" value="ECO:0007669"/>
    <property type="project" value="TreeGrafter"/>
</dbReference>
<dbReference type="GO" id="GO:0046872">
    <property type="term" value="F:metal ion binding"/>
    <property type="evidence" value="ECO:0007669"/>
    <property type="project" value="UniProtKB-KW"/>
</dbReference>
<dbReference type="GO" id="GO:0008479">
    <property type="term" value="F:tRNA-guanosine(34) queuine transglycosylase activity"/>
    <property type="evidence" value="ECO:0007669"/>
    <property type="project" value="UniProtKB-UniRule"/>
</dbReference>
<dbReference type="GO" id="GO:0008616">
    <property type="term" value="P:queuosine biosynthetic process"/>
    <property type="evidence" value="ECO:0007669"/>
    <property type="project" value="UniProtKB-UniRule"/>
</dbReference>
<dbReference type="GO" id="GO:0002099">
    <property type="term" value="P:tRNA wobble guanine modification"/>
    <property type="evidence" value="ECO:0007669"/>
    <property type="project" value="TreeGrafter"/>
</dbReference>
<dbReference type="GO" id="GO:0101030">
    <property type="term" value="P:tRNA-guanine transglycosylation"/>
    <property type="evidence" value="ECO:0007669"/>
    <property type="project" value="InterPro"/>
</dbReference>
<dbReference type="FunFam" id="3.20.20.105:FF:000001">
    <property type="entry name" value="Queuine tRNA-ribosyltransferase"/>
    <property type="match status" value="1"/>
</dbReference>
<dbReference type="Gene3D" id="3.20.20.105">
    <property type="entry name" value="Queuine tRNA-ribosyltransferase-like"/>
    <property type="match status" value="1"/>
</dbReference>
<dbReference type="HAMAP" id="MF_00168">
    <property type="entry name" value="Q_tRNA_Tgt"/>
    <property type="match status" value="1"/>
</dbReference>
<dbReference type="InterPro" id="IPR050076">
    <property type="entry name" value="ArchSynthase1/Queuine_TRR"/>
</dbReference>
<dbReference type="InterPro" id="IPR004803">
    <property type="entry name" value="TGT"/>
</dbReference>
<dbReference type="InterPro" id="IPR036511">
    <property type="entry name" value="TGT-like_sf"/>
</dbReference>
<dbReference type="InterPro" id="IPR002616">
    <property type="entry name" value="tRNA_ribo_trans-like"/>
</dbReference>
<dbReference type="NCBIfam" id="TIGR00430">
    <property type="entry name" value="Q_tRNA_tgt"/>
    <property type="match status" value="1"/>
</dbReference>
<dbReference type="NCBIfam" id="TIGR00449">
    <property type="entry name" value="tgt_general"/>
    <property type="match status" value="1"/>
</dbReference>
<dbReference type="PANTHER" id="PTHR46499">
    <property type="entry name" value="QUEUINE TRNA-RIBOSYLTRANSFERASE"/>
    <property type="match status" value="1"/>
</dbReference>
<dbReference type="PANTHER" id="PTHR46499:SF1">
    <property type="entry name" value="QUEUINE TRNA-RIBOSYLTRANSFERASE"/>
    <property type="match status" value="1"/>
</dbReference>
<dbReference type="Pfam" id="PF01702">
    <property type="entry name" value="TGT"/>
    <property type="match status" value="1"/>
</dbReference>
<dbReference type="SUPFAM" id="SSF51713">
    <property type="entry name" value="tRNA-guanine transglycosylase"/>
    <property type="match status" value="1"/>
</dbReference>
<accession>Q6HDA9</accession>
<feature type="chain" id="PRO_0000135449" description="Queuine tRNA-ribosyltransferase">
    <location>
        <begin position="1"/>
        <end position="379"/>
    </location>
</feature>
<feature type="region of interest" description="RNA binding" evidence="1">
    <location>
        <begin position="249"/>
        <end position="255"/>
    </location>
</feature>
<feature type="region of interest" description="RNA binding; important for wobble base 34 recognition" evidence="1">
    <location>
        <begin position="273"/>
        <end position="277"/>
    </location>
</feature>
<feature type="active site" description="Proton acceptor" evidence="1">
    <location>
        <position position="94"/>
    </location>
</feature>
<feature type="active site" description="Nucleophile" evidence="1">
    <location>
        <position position="268"/>
    </location>
</feature>
<feature type="binding site" evidence="1">
    <location>
        <begin position="94"/>
        <end position="98"/>
    </location>
    <ligand>
        <name>substrate</name>
    </ligand>
</feature>
<feature type="binding site" evidence="1">
    <location>
        <position position="148"/>
    </location>
    <ligand>
        <name>substrate</name>
    </ligand>
</feature>
<feature type="binding site" evidence="1">
    <location>
        <position position="191"/>
    </location>
    <ligand>
        <name>substrate</name>
    </ligand>
</feature>
<feature type="binding site" evidence="1">
    <location>
        <position position="218"/>
    </location>
    <ligand>
        <name>substrate</name>
    </ligand>
</feature>
<feature type="binding site" evidence="1">
    <location>
        <position position="306"/>
    </location>
    <ligand>
        <name>Zn(2+)</name>
        <dbReference type="ChEBI" id="CHEBI:29105"/>
    </ligand>
</feature>
<feature type="binding site" evidence="1">
    <location>
        <position position="308"/>
    </location>
    <ligand>
        <name>Zn(2+)</name>
        <dbReference type="ChEBI" id="CHEBI:29105"/>
    </ligand>
</feature>
<feature type="binding site" evidence="1">
    <location>
        <position position="311"/>
    </location>
    <ligand>
        <name>Zn(2+)</name>
        <dbReference type="ChEBI" id="CHEBI:29105"/>
    </ligand>
</feature>
<feature type="binding site" evidence="1">
    <location>
        <position position="337"/>
    </location>
    <ligand>
        <name>Zn(2+)</name>
        <dbReference type="ChEBI" id="CHEBI:29105"/>
    </ligand>
</feature>
<organism>
    <name type="scientific">Bacillus thuringiensis subsp. konkukian (strain 97-27)</name>
    <dbReference type="NCBI Taxonomy" id="281309"/>
    <lineage>
        <taxon>Bacteria</taxon>
        <taxon>Bacillati</taxon>
        <taxon>Bacillota</taxon>
        <taxon>Bacilli</taxon>
        <taxon>Bacillales</taxon>
        <taxon>Bacillaceae</taxon>
        <taxon>Bacillus</taxon>
        <taxon>Bacillus cereus group</taxon>
    </lineage>
</organism>
<keyword id="KW-0328">Glycosyltransferase</keyword>
<keyword id="KW-0479">Metal-binding</keyword>
<keyword id="KW-0671">Queuosine biosynthesis</keyword>
<keyword id="KW-0808">Transferase</keyword>
<keyword id="KW-0819">tRNA processing</keyword>
<keyword id="KW-0862">Zinc</keyword>
<evidence type="ECO:0000255" key="1">
    <source>
        <dbReference type="HAMAP-Rule" id="MF_00168"/>
    </source>
</evidence>
<comment type="function">
    <text evidence="1">Catalyzes the base-exchange of a guanine (G) residue with the queuine precursor 7-aminomethyl-7-deazaguanine (PreQ1) at position 34 (anticodon wobble position) in tRNAs with GU(N) anticodons (tRNA-Asp, -Asn, -His and -Tyr). Catalysis occurs through a double-displacement mechanism. The nucleophile active site attacks the C1' of nucleotide 34 to detach the guanine base from the RNA, forming a covalent enzyme-RNA intermediate. The proton acceptor active site deprotonates the incoming PreQ1, allowing a nucleophilic attack on the C1' of the ribose to form the product. After dissociation, two additional enzymatic reactions on the tRNA convert PreQ1 to queuine (Q), resulting in the hypermodified nucleoside queuosine (7-(((4,5-cis-dihydroxy-2-cyclopenten-1-yl)amino)methyl)-7-deazaguanosine).</text>
</comment>
<comment type="catalytic activity">
    <reaction evidence="1">
        <text>7-aminomethyl-7-carbaguanine + guanosine(34) in tRNA = 7-aminomethyl-7-carbaguanosine(34) in tRNA + guanine</text>
        <dbReference type="Rhea" id="RHEA:24104"/>
        <dbReference type="Rhea" id="RHEA-COMP:10341"/>
        <dbReference type="Rhea" id="RHEA-COMP:10342"/>
        <dbReference type="ChEBI" id="CHEBI:16235"/>
        <dbReference type="ChEBI" id="CHEBI:58703"/>
        <dbReference type="ChEBI" id="CHEBI:74269"/>
        <dbReference type="ChEBI" id="CHEBI:82833"/>
        <dbReference type="EC" id="2.4.2.29"/>
    </reaction>
</comment>
<comment type="cofactor">
    <cofactor evidence="1">
        <name>Zn(2+)</name>
        <dbReference type="ChEBI" id="CHEBI:29105"/>
    </cofactor>
    <text evidence="1">Binds 1 zinc ion per subunit.</text>
</comment>
<comment type="pathway">
    <text evidence="1">tRNA modification; tRNA-queuosine biosynthesis.</text>
</comment>
<comment type="subunit">
    <text evidence="1">Homodimer. Within each dimer, one monomer is responsible for RNA recognition and catalysis, while the other monomer binds to the replacement base PreQ1.</text>
</comment>
<comment type="similarity">
    <text evidence="1">Belongs to the queuine tRNA-ribosyltransferase family.</text>
</comment>
<reference key="1">
    <citation type="journal article" date="2006" name="J. Bacteriol.">
        <title>Pathogenomic sequence analysis of Bacillus cereus and Bacillus thuringiensis isolates closely related to Bacillus anthracis.</title>
        <authorList>
            <person name="Han C.S."/>
            <person name="Xie G."/>
            <person name="Challacombe J.F."/>
            <person name="Altherr M.R."/>
            <person name="Bhotika S.S."/>
            <person name="Bruce D."/>
            <person name="Campbell C.S."/>
            <person name="Campbell M.L."/>
            <person name="Chen J."/>
            <person name="Chertkov O."/>
            <person name="Cleland C."/>
            <person name="Dimitrijevic M."/>
            <person name="Doggett N.A."/>
            <person name="Fawcett J.J."/>
            <person name="Glavina T."/>
            <person name="Goodwin L.A."/>
            <person name="Hill K.K."/>
            <person name="Hitchcock P."/>
            <person name="Jackson P.J."/>
            <person name="Keim P."/>
            <person name="Kewalramani A.R."/>
            <person name="Longmire J."/>
            <person name="Lucas S."/>
            <person name="Malfatti S."/>
            <person name="McMurry K."/>
            <person name="Meincke L.J."/>
            <person name="Misra M."/>
            <person name="Moseman B.L."/>
            <person name="Mundt M."/>
            <person name="Munk A.C."/>
            <person name="Okinaka R.T."/>
            <person name="Parson-Quintana B."/>
            <person name="Reilly L.P."/>
            <person name="Richardson P."/>
            <person name="Robinson D.L."/>
            <person name="Rubin E."/>
            <person name="Saunders E."/>
            <person name="Tapia R."/>
            <person name="Tesmer J.G."/>
            <person name="Thayer N."/>
            <person name="Thompson L.S."/>
            <person name="Tice H."/>
            <person name="Ticknor L.O."/>
            <person name="Wills P.L."/>
            <person name="Brettin T.S."/>
            <person name="Gilna P."/>
        </authorList>
    </citation>
    <scope>NUCLEOTIDE SEQUENCE [LARGE SCALE GENOMIC DNA]</scope>
    <source>
        <strain>97-27</strain>
    </source>
</reference>
<gene>
    <name evidence="1" type="primary">tgt</name>
    <name type="ordered locus">BT9727_4150</name>
</gene>
<proteinExistence type="inferred from homology"/>